<sequence>MLGIGAFKQRIPRPGEALPGREQALPLHNTHLINGHPLRGEFTGLAQVQFGLGCFWGAERKFWKVPGVYTTAAGYAGGQTPNATYSEVCSGQTGHTEAVLVVFDEQAVSFEHLLRTFWESHDPTQGMQQGNDVGTQYRSAIYCTTQAQYAAALASRDAYQQQLTAAGYGAITTEIGFPAPTFYYAEDDHQQYLAKHPNGYCGLGGTGVSCPIGLDA</sequence>
<dbReference type="EC" id="1.8.4.11" evidence="1"/>
<dbReference type="EMBL" id="CP000967">
    <property type="protein sequence ID" value="ACD57816.1"/>
    <property type="molecule type" value="Genomic_DNA"/>
</dbReference>
<dbReference type="RefSeq" id="WP_012444263.1">
    <property type="nucleotide sequence ID" value="NC_010717.2"/>
</dbReference>
<dbReference type="SMR" id="B2SQI9"/>
<dbReference type="KEGG" id="xop:PXO_04598"/>
<dbReference type="PATRIC" id="fig|291331.8.peg.4051"/>
<dbReference type="eggNOG" id="COG0225">
    <property type="taxonomic scope" value="Bacteria"/>
</dbReference>
<dbReference type="HOGENOM" id="CLU_031040_10_3_6"/>
<dbReference type="Proteomes" id="UP000001740">
    <property type="component" value="Chromosome"/>
</dbReference>
<dbReference type="GO" id="GO:0005737">
    <property type="term" value="C:cytoplasm"/>
    <property type="evidence" value="ECO:0007669"/>
    <property type="project" value="TreeGrafter"/>
</dbReference>
<dbReference type="GO" id="GO:0036456">
    <property type="term" value="F:L-methionine-(S)-S-oxide reductase activity"/>
    <property type="evidence" value="ECO:0007669"/>
    <property type="project" value="TreeGrafter"/>
</dbReference>
<dbReference type="GO" id="GO:0008113">
    <property type="term" value="F:peptide-methionine (S)-S-oxide reductase activity"/>
    <property type="evidence" value="ECO:0007669"/>
    <property type="project" value="UniProtKB-UniRule"/>
</dbReference>
<dbReference type="GO" id="GO:0034599">
    <property type="term" value="P:cellular response to oxidative stress"/>
    <property type="evidence" value="ECO:0007669"/>
    <property type="project" value="TreeGrafter"/>
</dbReference>
<dbReference type="GO" id="GO:0036211">
    <property type="term" value="P:protein modification process"/>
    <property type="evidence" value="ECO:0007669"/>
    <property type="project" value="UniProtKB-UniRule"/>
</dbReference>
<dbReference type="FunFam" id="3.30.1060.10:FF:000001">
    <property type="entry name" value="Peptide methionine sulfoxide reductase MsrA"/>
    <property type="match status" value="1"/>
</dbReference>
<dbReference type="Gene3D" id="3.30.1060.10">
    <property type="entry name" value="Peptide methionine sulphoxide reductase MsrA"/>
    <property type="match status" value="1"/>
</dbReference>
<dbReference type="HAMAP" id="MF_01401">
    <property type="entry name" value="MsrA"/>
    <property type="match status" value="1"/>
</dbReference>
<dbReference type="InterPro" id="IPR002569">
    <property type="entry name" value="Met_Sox_Rdtase_MsrA_dom"/>
</dbReference>
<dbReference type="InterPro" id="IPR036509">
    <property type="entry name" value="Met_Sox_Rdtase_MsrA_sf"/>
</dbReference>
<dbReference type="InterPro" id="IPR050162">
    <property type="entry name" value="MsrA_MetSO_reductase"/>
</dbReference>
<dbReference type="NCBIfam" id="TIGR00401">
    <property type="entry name" value="msrA"/>
    <property type="match status" value="1"/>
</dbReference>
<dbReference type="PANTHER" id="PTHR42799">
    <property type="entry name" value="MITOCHONDRIAL PEPTIDE METHIONINE SULFOXIDE REDUCTASE"/>
    <property type="match status" value="1"/>
</dbReference>
<dbReference type="PANTHER" id="PTHR42799:SF2">
    <property type="entry name" value="MITOCHONDRIAL PEPTIDE METHIONINE SULFOXIDE REDUCTASE"/>
    <property type="match status" value="1"/>
</dbReference>
<dbReference type="Pfam" id="PF01625">
    <property type="entry name" value="PMSR"/>
    <property type="match status" value="1"/>
</dbReference>
<dbReference type="SUPFAM" id="SSF55068">
    <property type="entry name" value="Peptide methionine sulfoxide reductase"/>
    <property type="match status" value="1"/>
</dbReference>
<proteinExistence type="inferred from homology"/>
<name>MSRA_XANOP</name>
<comment type="function">
    <text evidence="1">Has an important function as a repair enzyme for proteins that have been inactivated by oxidation. Catalyzes the reversible oxidation-reduction of methionine sulfoxide in proteins to methionine.</text>
</comment>
<comment type="catalytic activity">
    <reaction evidence="1">
        <text>L-methionyl-[protein] + [thioredoxin]-disulfide + H2O = L-methionyl-(S)-S-oxide-[protein] + [thioredoxin]-dithiol</text>
        <dbReference type="Rhea" id="RHEA:14217"/>
        <dbReference type="Rhea" id="RHEA-COMP:10698"/>
        <dbReference type="Rhea" id="RHEA-COMP:10700"/>
        <dbReference type="Rhea" id="RHEA-COMP:12313"/>
        <dbReference type="Rhea" id="RHEA-COMP:12315"/>
        <dbReference type="ChEBI" id="CHEBI:15377"/>
        <dbReference type="ChEBI" id="CHEBI:16044"/>
        <dbReference type="ChEBI" id="CHEBI:29950"/>
        <dbReference type="ChEBI" id="CHEBI:44120"/>
        <dbReference type="ChEBI" id="CHEBI:50058"/>
        <dbReference type="EC" id="1.8.4.11"/>
    </reaction>
</comment>
<comment type="catalytic activity">
    <reaction evidence="1">
        <text>[thioredoxin]-disulfide + L-methionine + H2O = L-methionine (S)-S-oxide + [thioredoxin]-dithiol</text>
        <dbReference type="Rhea" id="RHEA:19993"/>
        <dbReference type="Rhea" id="RHEA-COMP:10698"/>
        <dbReference type="Rhea" id="RHEA-COMP:10700"/>
        <dbReference type="ChEBI" id="CHEBI:15377"/>
        <dbReference type="ChEBI" id="CHEBI:29950"/>
        <dbReference type="ChEBI" id="CHEBI:50058"/>
        <dbReference type="ChEBI" id="CHEBI:57844"/>
        <dbReference type="ChEBI" id="CHEBI:58772"/>
        <dbReference type="EC" id="1.8.4.11"/>
    </reaction>
</comment>
<comment type="similarity">
    <text evidence="1">Belongs to the MsrA Met sulfoxide reductase family.</text>
</comment>
<reference key="1">
    <citation type="journal article" date="2008" name="BMC Genomics">
        <title>Genome sequence and rapid evolution of the rice pathogen Xanthomonas oryzae pv. oryzae PXO99A.</title>
        <authorList>
            <person name="Salzberg S.L."/>
            <person name="Sommer D.D."/>
            <person name="Schatz M.C."/>
            <person name="Phillippy A.M."/>
            <person name="Rabinowicz P.D."/>
            <person name="Tsuge S."/>
            <person name="Furutani A."/>
            <person name="Ochiai H."/>
            <person name="Delcher A.L."/>
            <person name="Kelley D."/>
            <person name="Madupu R."/>
            <person name="Puiu D."/>
            <person name="Radune D."/>
            <person name="Shumway M."/>
            <person name="Trapnell C."/>
            <person name="Aparna G."/>
            <person name="Jha G."/>
            <person name="Pandey A."/>
            <person name="Patil P.B."/>
            <person name="Ishihara H."/>
            <person name="Meyer D.F."/>
            <person name="Szurek B."/>
            <person name="Verdier V."/>
            <person name="Koebnik R."/>
            <person name="Dow J.M."/>
            <person name="Ryan R.P."/>
            <person name="Hirata H."/>
            <person name="Tsuyumu S."/>
            <person name="Won Lee S."/>
            <person name="Seo Y.-S."/>
            <person name="Sriariyanum M."/>
            <person name="Ronald P.C."/>
            <person name="Sonti R.V."/>
            <person name="Van Sluys M.-A."/>
            <person name="Leach J.E."/>
            <person name="White F.F."/>
            <person name="Bogdanove A.J."/>
        </authorList>
    </citation>
    <scope>NUCLEOTIDE SEQUENCE [LARGE SCALE GENOMIC DNA]</scope>
    <source>
        <strain>PXO99A</strain>
    </source>
</reference>
<gene>
    <name evidence="1" type="primary">msrA</name>
    <name type="ordered locus">PXO_04598</name>
</gene>
<protein>
    <recommendedName>
        <fullName evidence="1">Peptide methionine sulfoxide reductase MsrA</fullName>
        <shortName evidence="1">Protein-methionine-S-oxide reductase</shortName>
        <ecNumber evidence="1">1.8.4.11</ecNumber>
    </recommendedName>
    <alternativeName>
        <fullName evidence="1">Peptide-methionine (S)-S-oxide reductase</fullName>
        <shortName evidence="1">Peptide Met(O) reductase</shortName>
    </alternativeName>
</protein>
<organism>
    <name type="scientific">Xanthomonas oryzae pv. oryzae (strain PXO99A)</name>
    <dbReference type="NCBI Taxonomy" id="360094"/>
    <lineage>
        <taxon>Bacteria</taxon>
        <taxon>Pseudomonadati</taxon>
        <taxon>Pseudomonadota</taxon>
        <taxon>Gammaproteobacteria</taxon>
        <taxon>Lysobacterales</taxon>
        <taxon>Lysobacteraceae</taxon>
        <taxon>Xanthomonas</taxon>
    </lineage>
</organism>
<evidence type="ECO:0000255" key="1">
    <source>
        <dbReference type="HAMAP-Rule" id="MF_01401"/>
    </source>
</evidence>
<accession>B2SQI9</accession>
<keyword id="KW-0560">Oxidoreductase</keyword>
<feature type="chain" id="PRO_1000145444" description="Peptide methionine sulfoxide reductase MsrA">
    <location>
        <begin position="1"/>
        <end position="216"/>
    </location>
</feature>
<feature type="active site" evidence="1">
    <location>
        <position position="54"/>
    </location>
</feature>